<reference key="1">
    <citation type="journal article" date="2002" name="Nature">
        <title>The genome sequence and structure of rice chromosome 1.</title>
        <authorList>
            <person name="Sasaki T."/>
            <person name="Matsumoto T."/>
            <person name="Yamamoto K."/>
            <person name="Sakata K."/>
            <person name="Baba T."/>
            <person name="Katayose Y."/>
            <person name="Wu J."/>
            <person name="Niimura Y."/>
            <person name="Cheng Z."/>
            <person name="Nagamura Y."/>
            <person name="Antonio B.A."/>
            <person name="Kanamori H."/>
            <person name="Hosokawa S."/>
            <person name="Masukawa M."/>
            <person name="Arikawa K."/>
            <person name="Chiden Y."/>
            <person name="Hayashi M."/>
            <person name="Okamoto M."/>
            <person name="Ando T."/>
            <person name="Aoki H."/>
            <person name="Arita K."/>
            <person name="Hamada M."/>
            <person name="Harada C."/>
            <person name="Hijishita S."/>
            <person name="Honda M."/>
            <person name="Ichikawa Y."/>
            <person name="Idonuma A."/>
            <person name="Iijima M."/>
            <person name="Ikeda M."/>
            <person name="Ikeno M."/>
            <person name="Ito S."/>
            <person name="Ito T."/>
            <person name="Ito Y."/>
            <person name="Ito Y."/>
            <person name="Iwabuchi A."/>
            <person name="Kamiya K."/>
            <person name="Karasawa W."/>
            <person name="Katagiri S."/>
            <person name="Kikuta A."/>
            <person name="Kobayashi N."/>
            <person name="Kono I."/>
            <person name="Machita K."/>
            <person name="Maehara T."/>
            <person name="Mizuno H."/>
            <person name="Mizubayashi T."/>
            <person name="Mukai Y."/>
            <person name="Nagasaki H."/>
            <person name="Nakashima M."/>
            <person name="Nakama Y."/>
            <person name="Nakamichi Y."/>
            <person name="Nakamura M."/>
            <person name="Namiki N."/>
            <person name="Negishi M."/>
            <person name="Ohta I."/>
            <person name="Ono N."/>
            <person name="Saji S."/>
            <person name="Sakai K."/>
            <person name="Shibata M."/>
            <person name="Shimokawa T."/>
            <person name="Shomura A."/>
            <person name="Song J."/>
            <person name="Takazaki Y."/>
            <person name="Terasawa K."/>
            <person name="Tsuji K."/>
            <person name="Waki K."/>
            <person name="Yamagata H."/>
            <person name="Yamane H."/>
            <person name="Yoshiki S."/>
            <person name="Yoshihara R."/>
            <person name="Yukawa K."/>
            <person name="Zhong H."/>
            <person name="Iwama H."/>
            <person name="Endo T."/>
            <person name="Ito H."/>
            <person name="Hahn J.H."/>
            <person name="Kim H.-I."/>
            <person name="Eun M.-Y."/>
            <person name="Yano M."/>
            <person name="Jiang J."/>
            <person name="Gojobori T."/>
        </authorList>
    </citation>
    <scope>NUCLEOTIDE SEQUENCE [LARGE SCALE GENOMIC DNA]</scope>
    <source>
        <strain>cv. Nipponbare</strain>
    </source>
</reference>
<reference key="2">
    <citation type="journal article" date="2005" name="Nature">
        <title>The map-based sequence of the rice genome.</title>
        <authorList>
            <consortium name="International rice genome sequencing project (IRGSP)"/>
        </authorList>
    </citation>
    <scope>NUCLEOTIDE SEQUENCE [LARGE SCALE GENOMIC DNA]</scope>
    <source>
        <strain>cv. Nipponbare</strain>
    </source>
</reference>
<reference key="3">
    <citation type="journal article" date="2008" name="Nucleic Acids Res.">
        <title>The rice annotation project database (RAP-DB): 2008 update.</title>
        <authorList>
            <consortium name="The rice annotation project (RAP)"/>
        </authorList>
    </citation>
    <scope>GENOME REANNOTATION</scope>
    <source>
        <strain>cv. Nipponbare</strain>
    </source>
</reference>
<reference key="4">
    <citation type="journal article" date="2013" name="Rice">
        <title>Improvement of the Oryza sativa Nipponbare reference genome using next generation sequence and optical map data.</title>
        <authorList>
            <person name="Kawahara Y."/>
            <person name="de la Bastide M."/>
            <person name="Hamilton J.P."/>
            <person name="Kanamori H."/>
            <person name="McCombie W.R."/>
            <person name="Ouyang S."/>
            <person name="Schwartz D.C."/>
            <person name="Tanaka T."/>
            <person name="Wu J."/>
            <person name="Zhou S."/>
            <person name="Childs K.L."/>
            <person name="Davidson R.M."/>
            <person name="Lin H."/>
            <person name="Quesada-Ocampo L."/>
            <person name="Vaillancourt B."/>
            <person name="Sakai H."/>
            <person name="Lee S.S."/>
            <person name="Kim J."/>
            <person name="Numa H."/>
            <person name="Itoh T."/>
            <person name="Buell C.R."/>
            <person name="Matsumoto T."/>
        </authorList>
    </citation>
    <scope>GENOME REANNOTATION</scope>
    <source>
        <strain>cv. Nipponbare</strain>
    </source>
</reference>
<reference key="5">
    <citation type="journal article" date="2005" name="PLoS Biol.">
        <title>The genomes of Oryza sativa: a history of duplications.</title>
        <authorList>
            <person name="Yu J."/>
            <person name="Wang J."/>
            <person name="Lin W."/>
            <person name="Li S."/>
            <person name="Li H."/>
            <person name="Zhou J."/>
            <person name="Ni P."/>
            <person name="Dong W."/>
            <person name="Hu S."/>
            <person name="Zeng C."/>
            <person name="Zhang J."/>
            <person name="Zhang Y."/>
            <person name="Li R."/>
            <person name="Xu Z."/>
            <person name="Li S."/>
            <person name="Li X."/>
            <person name="Zheng H."/>
            <person name="Cong L."/>
            <person name="Lin L."/>
            <person name="Yin J."/>
            <person name="Geng J."/>
            <person name="Li G."/>
            <person name="Shi J."/>
            <person name="Liu J."/>
            <person name="Lv H."/>
            <person name="Li J."/>
            <person name="Wang J."/>
            <person name="Deng Y."/>
            <person name="Ran L."/>
            <person name="Shi X."/>
            <person name="Wang X."/>
            <person name="Wu Q."/>
            <person name="Li C."/>
            <person name="Ren X."/>
            <person name="Wang J."/>
            <person name="Wang X."/>
            <person name="Li D."/>
            <person name="Liu D."/>
            <person name="Zhang X."/>
            <person name="Ji Z."/>
            <person name="Zhao W."/>
            <person name="Sun Y."/>
            <person name="Zhang Z."/>
            <person name="Bao J."/>
            <person name="Han Y."/>
            <person name="Dong L."/>
            <person name="Ji J."/>
            <person name="Chen P."/>
            <person name="Wu S."/>
            <person name="Liu J."/>
            <person name="Xiao Y."/>
            <person name="Bu D."/>
            <person name="Tan J."/>
            <person name="Yang L."/>
            <person name="Ye C."/>
            <person name="Zhang J."/>
            <person name="Xu J."/>
            <person name="Zhou Y."/>
            <person name="Yu Y."/>
            <person name="Zhang B."/>
            <person name="Zhuang S."/>
            <person name="Wei H."/>
            <person name="Liu B."/>
            <person name="Lei M."/>
            <person name="Yu H."/>
            <person name="Li Y."/>
            <person name="Xu H."/>
            <person name="Wei S."/>
            <person name="He X."/>
            <person name="Fang L."/>
            <person name="Zhang Z."/>
            <person name="Zhang Y."/>
            <person name="Huang X."/>
            <person name="Su Z."/>
            <person name="Tong W."/>
            <person name="Li J."/>
            <person name="Tong Z."/>
            <person name="Li S."/>
            <person name="Ye J."/>
            <person name="Wang L."/>
            <person name="Fang L."/>
            <person name="Lei T."/>
            <person name="Chen C.-S."/>
            <person name="Chen H.-C."/>
            <person name="Xu Z."/>
            <person name="Li H."/>
            <person name="Huang H."/>
            <person name="Zhang F."/>
            <person name="Xu H."/>
            <person name="Li N."/>
            <person name="Zhao C."/>
            <person name="Li S."/>
            <person name="Dong L."/>
            <person name="Huang Y."/>
            <person name="Li L."/>
            <person name="Xi Y."/>
            <person name="Qi Q."/>
            <person name="Li W."/>
            <person name="Zhang B."/>
            <person name="Hu W."/>
            <person name="Zhang Y."/>
            <person name="Tian X."/>
            <person name="Jiao Y."/>
            <person name="Liang X."/>
            <person name="Jin J."/>
            <person name="Gao L."/>
            <person name="Zheng W."/>
            <person name="Hao B."/>
            <person name="Liu S.-M."/>
            <person name="Wang W."/>
            <person name="Yuan L."/>
            <person name="Cao M."/>
            <person name="McDermott J."/>
            <person name="Samudrala R."/>
            <person name="Wang J."/>
            <person name="Wong G.K.-S."/>
            <person name="Yang H."/>
        </authorList>
    </citation>
    <scope>NUCLEOTIDE SEQUENCE [LARGE SCALE GENOMIC DNA]</scope>
    <source>
        <strain>cv. Nipponbare</strain>
    </source>
</reference>
<accession>Q94JE1</accession>
<accession>A0A0P0UYB8</accession>
<gene>
    <name type="primary">H2B.5</name>
    <name type="ordered locus">Os01g0153300</name>
    <name type="ordered locus">LOC_Os01g06010</name>
    <name type="ORF">OsJ_000408</name>
    <name type="ORF">P0030H07.24</name>
</gene>
<proteinExistence type="inferred from homology"/>
<comment type="function">
    <text>Core component of nucleosome. Nucleosomes wrap and compact DNA into chromatin, limiting DNA accessibility to the cellular machineries which require DNA as a template. Histones thereby play a central role in transcription regulation, DNA repair, DNA replication and chromosomal stability. DNA accessibility is regulated via a complex set of post-translational modifications of histones, also called histone code, and nucleosome remodeling.</text>
</comment>
<comment type="subunit">
    <text>The nucleosome is a histone octamer containing two molecules each of H2A, H2B, H3 and H4 assembled in one H3-H4 heterotetramer and two H2A-H2B heterodimers. The octamer wraps approximately 147 bp of DNA.</text>
</comment>
<comment type="subcellular location">
    <subcellularLocation>
        <location evidence="1">Nucleus</location>
    </subcellularLocation>
    <subcellularLocation>
        <location evidence="1">Chromosome</location>
    </subcellularLocation>
</comment>
<comment type="PTM">
    <text evidence="1">Can be acetylated to form H2BK6ac and H2BK33ac.</text>
</comment>
<comment type="PTM">
    <text evidence="1">Monoubiquitinated by BRE1 to form H2BK143ub1 and deubiquitinated by UBP26. Required for heterochromatic histone H3 di- and trimethylation at H3K4me. May give a specific tag for epigenetic transcriptional activation (By similarity).</text>
</comment>
<comment type="similarity">
    <text evidence="3">Belongs to the histone H2B family.</text>
</comment>
<comment type="caution">
    <text evidence="3">To ensure consistency between histone entries, we follow the 'Brno' nomenclature for histone modifications, with positions referring to those used in the literature for the 'closest' model organism. Due to slight variations in histone sequences between organisms and to the presence of initiator methionine in UniProtKB/Swiss-Prot sequences, the actual positions of modified amino acids in the sequence generally differ. In this entry the following conventions are used: H2BK6ac = acetylated Lys-7; H2BK33ac = acetylated Lys-37; H2BK143ub1 = monoubiquitinated Lys-151.</text>
</comment>
<protein>
    <recommendedName>
        <fullName>Histone H2B.5</fullName>
    </recommendedName>
</protein>
<dbReference type="EMBL" id="AP003045">
    <property type="protein sequence ID" value="BAB44055.1"/>
    <property type="molecule type" value="Genomic_DNA"/>
</dbReference>
<dbReference type="EMBL" id="AP008207">
    <property type="protein sequence ID" value="BAF03967.1"/>
    <property type="molecule type" value="Genomic_DNA"/>
</dbReference>
<dbReference type="EMBL" id="AP014957">
    <property type="protein sequence ID" value="BAS70455.1"/>
    <property type="molecule type" value="Genomic_DNA"/>
</dbReference>
<dbReference type="EMBL" id="CM000138">
    <property type="protein sequence ID" value="EAZ10583.1"/>
    <property type="molecule type" value="Genomic_DNA"/>
</dbReference>
<dbReference type="RefSeq" id="XP_015617155.1">
    <property type="nucleotide sequence ID" value="XM_015761669.1"/>
</dbReference>
<dbReference type="SMR" id="Q94JE1"/>
<dbReference type="FunCoup" id="Q94JE1">
    <property type="interactions" value="1710"/>
</dbReference>
<dbReference type="STRING" id="39947.Q94JE1"/>
<dbReference type="PaxDb" id="39947-Q94JE1"/>
<dbReference type="EnsemblPlants" id="Os01t0153300-00">
    <property type="protein sequence ID" value="Os01t0153300-00"/>
    <property type="gene ID" value="Os01g0153300"/>
</dbReference>
<dbReference type="Gramene" id="Os01t0153300-00">
    <property type="protein sequence ID" value="Os01t0153300-00"/>
    <property type="gene ID" value="Os01g0153300"/>
</dbReference>
<dbReference type="KEGG" id="dosa:Os01g0153300"/>
<dbReference type="eggNOG" id="KOG1744">
    <property type="taxonomic scope" value="Eukaryota"/>
</dbReference>
<dbReference type="HOGENOM" id="CLU_075666_1_0_1"/>
<dbReference type="InParanoid" id="Q94JE1"/>
<dbReference type="OMA" id="TCKIYLF"/>
<dbReference type="Proteomes" id="UP000000763">
    <property type="component" value="Chromosome 1"/>
</dbReference>
<dbReference type="Proteomes" id="UP000007752">
    <property type="component" value="Chromosome 1"/>
</dbReference>
<dbReference type="Proteomes" id="UP000059680">
    <property type="component" value="Chromosome 1"/>
</dbReference>
<dbReference type="GO" id="GO:0000786">
    <property type="term" value="C:nucleosome"/>
    <property type="evidence" value="ECO:0007669"/>
    <property type="project" value="UniProtKB-KW"/>
</dbReference>
<dbReference type="GO" id="GO:0005634">
    <property type="term" value="C:nucleus"/>
    <property type="evidence" value="ECO:0007669"/>
    <property type="project" value="UniProtKB-SubCell"/>
</dbReference>
<dbReference type="GO" id="GO:0003677">
    <property type="term" value="F:DNA binding"/>
    <property type="evidence" value="ECO:0000318"/>
    <property type="project" value="GO_Central"/>
</dbReference>
<dbReference type="GO" id="GO:0046982">
    <property type="term" value="F:protein heterodimerization activity"/>
    <property type="evidence" value="ECO:0007669"/>
    <property type="project" value="InterPro"/>
</dbReference>
<dbReference type="GO" id="GO:0030527">
    <property type="term" value="F:structural constituent of chromatin"/>
    <property type="evidence" value="ECO:0007669"/>
    <property type="project" value="InterPro"/>
</dbReference>
<dbReference type="CDD" id="cd22910">
    <property type="entry name" value="HFD_H2B"/>
    <property type="match status" value="1"/>
</dbReference>
<dbReference type="FunFam" id="1.10.20.10:FF:000014">
    <property type="entry name" value="Histone H2B"/>
    <property type="match status" value="1"/>
</dbReference>
<dbReference type="Gene3D" id="1.10.20.10">
    <property type="entry name" value="Histone, subunit A"/>
    <property type="match status" value="1"/>
</dbReference>
<dbReference type="InterPro" id="IPR009072">
    <property type="entry name" value="Histone-fold"/>
</dbReference>
<dbReference type="InterPro" id="IPR007125">
    <property type="entry name" value="Histone_H2A/H2B/H3"/>
</dbReference>
<dbReference type="InterPro" id="IPR000558">
    <property type="entry name" value="Histone_H2B"/>
</dbReference>
<dbReference type="InterPro" id="IPR055333">
    <property type="entry name" value="HISTONE_H2B_site"/>
</dbReference>
<dbReference type="PANTHER" id="PTHR23428">
    <property type="entry name" value="HISTONE H2B"/>
    <property type="match status" value="1"/>
</dbReference>
<dbReference type="Pfam" id="PF00125">
    <property type="entry name" value="Histone"/>
    <property type="match status" value="1"/>
</dbReference>
<dbReference type="PRINTS" id="PR00621">
    <property type="entry name" value="HISTONEH2B"/>
</dbReference>
<dbReference type="SMART" id="SM00427">
    <property type="entry name" value="H2B"/>
    <property type="match status" value="1"/>
</dbReference>
<dbReference type="SUPFAM" id="SSF47113">
    <property type="entry name" value="Histone-fold"/>
    <property type="match status" value="1"/>
</dbReference>
<dbReference type="PROSITE" id="PS00357">
    <property type="entry name" value="HISTONE_H2B"/>
    <property type="match status" value="1"/>
</dbReference>
<feature type="initiator methionine" description="Removed" evidence="1">
    <location>
        <position position="1"/>
    </location>
</feature>
<feature type="chain" id="PRO_0000294185" description="Histone H2B.5">
    <location>
        <begin position="2"/>
        <end position="155"/>
    </location>
</feature>
<feature type="region of interest" description="Disordered" evidence="2">
    <location>
        <begin position="1"/>
        <end position="63"/>
    </location>
</feature>
<feature type="compositionally biased region" description="Basic and acidic residues" evidence="2">
    <location>
        <begin position="1"/>
        <end position="28"/>
    </location>
</feature>
<feature type="compositionally biased region" description="Basic and acidic residues" evidence="2">
    <location>
        <begin position="36"/>
        <end position="54"/>
    </location>
</feature>
<feature type="modified residue" description="N6-acetyllysine" evidence="1">
    <location>
        <position position="7"/>
    </location>
</feature>
<feature type="modified residue" description="N6-acetyllysine" evidence="1">
    <location>
        <position position="37"/>
    </location>
</feature>
<feature type="cross-link" description="Glycyl lysine isopeptide (Lys-Gly) (interchain with G-Cter in ubiquitin)" evidence="1">
    <location>
        <position position="151"/>
    </location>
</feature>
<evidence type="ECO:0000250" key="1"/>
<evidence type="ECO:0000256" key="2">
    <source>
        <dbReference type="SAM" id="MobiDB-lite"/>
    </source>
</evidence>
<evidence type="ECO:0000305" key="3"/>
<organism>
    <name type="scientific">Oryza sativa subsp. japonica</name>
    <name type="common">Rice</name>
    <dbReference type="NCBI Taxonomy" id="39947"/>
    <lineage>
        <taxon>Eukaryota</taxon>
        <taxon>Viridiplantae</taxon>
        <taxon>Streptophyta</taxon>
        <taxon>Embryophyta</taxon>
        <taxon>Tracheophyta</taxon>
        <taxon>Spermatophyta</taxon>
        <taxon>Magnoliopsida</taxon>
        <taxon>Liliopsida</taxon>
        <taxon>Poales</taxon>
        <taxon>Poaceae</taxon>
        <taxon>BOP clade</taxon>
        <taxon>Oryzoideae</taxon>
        <taxon>Oryzeae</taxon>
        <taxon>Oryzinae</taxon>
        <taxon>Oryza</taxon>
        <taxon>Oryza sativa</taxon>
    </lineage>
</organism>
<sequence length="155" mass="16758">MAPKAEKKPAAKKPAEEEPAAEKAEKAPAGKKPKAEKRLPAGKGEKGSGEGKKDRAGRKKAKKSVETYKIYIFKVLKQVHPDIGISSKAMSIMNSFINDIFEKLAAEAAKLARYNKKPTITSREIQTSVRLVLPGELAKHAVSEGTKAVTKFTSA</sequence>
<name>H2B5_ORYSJ</name>
<keyword id="KW-0007">Acetylation</keyword>
<keyword id="KW-0158">Chromosome</keyword>
<keyword id="KW-0238">DNA-binding</keyword>
<keyword id="KW-1017">Isopeptide bond</keyword>
<keyword id="KW-0544">Nucleosome core</keyword>
<keyword id="KW-0539">Nucleus</keyword>
<keyword id="KW-1185">Reference proteome</keyword>
<keyword id="KW-0832">Ubl conjugation</keyword>